<dbReference type="EMBL" id="GL534318">
    <property type="protein sequence ID" value="EFQ92435.1"/>
    <property type="molecule type" value="Genomic_DNA"/>
</dbReference>
<dbReference type="RefSeq" id="XP_003299466.1">
    <property type="nucleotide sequence ID" value="XM_003299418.1"/>
</dbReference>
<dbReference type="SMR" id="E3RPB1"/>
<dbReference type="STRING" id="861557.E3RPB1"/>
<dbReference type="EnsemblFungi" id="EFQ92435">
    <property type="protein sequence ID" value="EFQ92435"/>
    <property type="gene ID" value="PTT_10465"/>
</dbReference>
<dbReference type="KEGG" id="pte:PTT_10465"/>
<dbReference type="eggNOG" id="ENOG502RNK4">
    <property type="taxonomic scope" value="Eukaryota"/>
</dbReference>
<dbReference type="HOGENOM" id="CLU_033658_0_0_1"/>
<dbReference type="OrthoDB" id="10061064at2759"/>
<dbReference type="Proteomes" id="UP000001067">
    <property type="component" value="Unassembled WGS sequence"/>
</dbReference>
<dbReference type="GO" id="GO:0005737">
    <property type="term" value="C:cytoplasm"/>
    <property type="evidence" value="ECO:0007669"/>
    <property type="project" value="UniProtKB-SubCell"/>
</dbReference>
<dbReference type="GO" id="GO:0031965">
    <property type="term" value="C:nuclear membrane"/>
    <property type="evidence" value="ECO:0007669"/>
    <property type="project" value="TreeGrafter"/>
</dbReference>
<dbReference type="GO" id="GO:0070628">
    <property type="term" value="F:proteasome binding"/>
    <property type="evidence" value="ECO:0007669"/>
    <property type="project" value="TreeGrafter"/>
</dbReference>
<dbReference type="GO" id="GO:0071630">
    <property type="term" value="P:nuclear protein quality control by the ubiquitin-proteasome system"/>
    <property type="evidence" value="ECO:0007669"/>
    <property type="project" value="InterPro"/>
</dbReference>
<dbReference type="GO" id="GO:0031144">
    <property type="term" value="P:proteasome localization"/>
    <property type="evidence" value="ECO:0007669"/>
    <property type="project" value="InterPro"/>
</dbReference>
<dbReference type="GO" id="GO:0015031">
    <property type="term" value="P:protein transport"/>
    <property type="evidence" value="ECO:0007669"/>
    <property type="project" value="UniProtKB-KW"/>
</dbReference>
<dbReference type="FunFam" id="1.20.58.1590:FF:000001">
    <property type="entry name" value="Tethering factor for nuclear proteasome STS1"/>
    <property type="match status" value="1"/>
</dbReference>
<dbReference type="Gene3D" id="1.20.58.1590">
    <property type="entry name" value="Tethering factor for nuclear proteasome Cut8/Sts1"/>
    <property type="match status" value="1"/>
</dbReference>
<dbReference type="InterPro" id="IPR013868">
    <property type="entry name" value="Cut8/Sts1_fam"/>
</dbReference>
<dbReference type="InterPro" id="IPR038422">
    <property type="entry name" value="Cut8/Sts1_sf"/>
</dbReference>
<dbReference type="PANTHER" id="PTHR28032">
    <property type="entry name" value="FI02826P"/>
    <property type="match status" value="1"/>
</dbReference>
<dbReference type="PANTHER" id="PTHR28032:SF1">
    <property type="entry name" value="FI02826P"/>
    <property type="match status" value="1"/>
</dbReference>
<dbReference type="Pfam" id="PF08559">
    <property type="entry name" value="Cut8"/>
    <property type="match status" value="1"/>
</dbReference>
<accession>E3RPB1</accession>
<organism>
    <name type="scientific">Pyrenophora teres f. teres (strain 0-1)</name>
    <name type="common">Barley net blotch fungus</name>
    <name type="synonym">Drechslera teres f. teres</name>
    <dbReference type="NCBI Taxonomy" id="861557"/>
    <lineage>
        <taxon>Eukaryota</taxon>
        <taxon>Fungi</taxon>
        <taxon>Dikarya</taxon>
        <taxon>Ascomycota</taxon>
        <taxon>Pezizomycotina</taxon>
        <taxon>Dothideomycetes</taxon>
        <taxon>Pleosporomycetidae</taxon>
        <taxon>Pleosporales</taxon>
        <taxon>Pleosporineae</taxon>
        <taxon>Pleosporaceae</taxon>
        <taxon>Pyrenophora</taxon>
    </lineage>
</organism>
<proteinExistence type="inferred from homology"/>
<sequence length="310" mass="33978">MNVQYQAFTPPHLLNNTRRSPTRNISSLSSAMSGRKRKAEDDGSAGDDDRMSASPSASPAVLPRPAPRGMKRMRTNISGRPLPLPRLLETLSPDEMRNLLQSICQRHPDISNEIVTTAPRPSIQSTLEVLAKYEASFQAAFPFGGRASSDYAYNRVRQQLDELLDSLKDFTPHFLPPNEQQPATSLAFLDGATDIIHRLPNWDTFQHNRHKQEAYEEMAKAWAIVIREAAKKAGGIQLQYGGWDEKIAKHNEISGGKMQEAVNELRGGLGWMGAETSNSAAGAPADAMSIRQQLLSGNYGAGSPASIGAW</sequence>
<gene>
    <name type="primary">sts1</name>
    <name type="ORF">PTT_10465</name>
</gene>
<comment type="function">
    <text evidence="1">Involved in ubiquitin-mediated protein degradation. Regulatory factor in the ubiquitin/proteasome pathway that controls the turnover of proteasome substrates. Targets proteasomes to the nucleus and facilitates the degradation of nuclear proteins (By similarity).</text>
</comment>
<comment type="subunit">
    <text evidence="1">Binds the proteasome.</text>
</comment>
<comment type="subcellular location">
    <subcellularLocation>
        <location evidence="1">Cytoplasm</location>
    </subcellularLocation>
    <subcellularLocation>
        <location evidence="1">Nucleus</location>
    </subcellularLocation>
</comment>
<comment type="similarity">
    <text evidence="3">Belongs to the cut8/STS1 family.</text>
</comment>
<feature type="chain" id="PRO_0000409431" description="Tethering factor for nuclear proteasome sts1">
    <location>
        <begin position="1"/>
        <end position="310"/>
    </location>
</feature>
<feature type="region of interest" description="Disordered" evidence="2">
    <location>
        <begin position="1"/>
        <end position="85"/>
    </location>
</feature>
<feature type="compositionally biased region" description="Polar residues" evidence="2">
    <location>
        <begin position="14"/>
        <end position="32"/>
    </location>
</feature>
<feature type="compositionally biased region" description="Low complexity" evidence="2">
    <location>
        <begin position="52"/>
        <end position="63"/>
    </location>
</feature>
<name>STS1_PYRTT</name>
<keyword id="KW-0963">Cytoplasm</keyword>
<keyword id="KW-0539">Nucleus</keyword>
<keyword id="KW-0653">Protein transport</keyword>
<keyword id="KW-1185">Reference proteome</keyword>
<keyword id="KW-0813">Transport</keyword>
<evidence type="ECO:0000250" key="1"/>
<evidence type="ECO:0000256" key="2">
    <source>
        <dbReference type="SAM" id="MobiDB-lite"/>
    </source>
</evidence>
<evidence type="ECO:0000305" key="3"/>
<reference key="1">
    <citation type="journal article" date="2010" name="Genome Biol.">
        <title>A first genome assembly of the barley fungal pathogen Pyrenophora teres f. teres.</title>
        <authorList>
            <person name="Ellwood S.R."/>
            <person name="Liu Z."/>
            <person name="Syme R.A."/>
            <person name="Lai Z."/>
            <person name="Hane J.K."/>
            <person name="Keiper F."/>
            <person name="Moffat C.S."/>
            <person name="Oliver R.P."/>
            <person name="Friesen T.L."/>
        </authorList>
    </citation>
    <scope>NUCLEOTIDE SEQUENCE [LARGE SCALE GENOMIC DNA]</scope>
    <source>
        <strain>0-1</strain>
    </source>
</reference>
<protein>
    <recommendedName>
        <fullName>Tethering factor for nuclear proteasome sts1</fullName>
    </recommendedName>
</protein>